<organism>
    <name type="scientific">Shewanella amazonensis (strain ATCC BAA-1098 / SB2B)</name>
    <dbReference type="NCBI Taxonomy" id="326297"/>
    <lineage>
        <taxon>Bacteria</taxon>
        <taxon>Pseudomonadati</taxon>
        <taxon>Pseudomonadota</taxon>
        <taxon>Gammaproteobacteria</taxon>
        <taxon>Alteromonadales</taxon>
        <taxon>Shewanellaceae</taxon>
        <taxon>Shewanella</taxon>
    </lineage>
</organism>
<reference key="1">
    <citation type="submission" date="2006-12" db="EMBL/GenBank/DDBJ databases">
        <title>Complete sequence of Shewanella amazonensis SB2B.</title>
        <authorList>
            <consortium name="US DOE Joint Genome Institute"/>
            <person name="Copeland A."/>
            <person name="Lucas S."/>
            <person name="Lapidus A."/>
            <person name="Barry K."/>
            <person name="Detter J.C."/>
            <person name="Glavina del Rio T."/>
            <person name="Hammon N."/>
            <person name="Israni S."/>
            <person name="Dalin E."/>
            <person name="Tice H."/>
            <person name="Pitluck S."/>
            <person name="Munk A.C."/>
            <person name="Brettin T."/>
            <person name="Bruce D."/>
            <person name="Han C."/>
            <person name="Tapia R."/>
            <person name="Gilna P."/>
            <person name="Schmutz J."/>
            <person name="Larimer F."/>
            <person name="Land M."/>
            <person name="Hauser L."/>
            <person name="Kyrpides N."/>
            <person name="Mikhailova N."/>
            <person name="Fredrickson J."/>
            <person name="Richardson P."/>
        </authorList>
    </citation>
    <scope>NUCLEOTIDE SEQUENCE [LARGE SCALE GENOMIC DNA]</scope>
    <source>
        <strain>ATCC BAA-1098 / SB2B</strain>
    </source>
</reference>
<keyword id="KW-0963">Cytoplasm</keyword>
<keyword id="KW-0489">Methyltransferase</keyword>
<keyword id="KW-1185">Reference proteome</keyword>
<keyword id="KW-0949">S-adenosyl-L-methionine</keyword>
<keyword id="KW-0808">Transferase</keyword>
<dbReference type="EC" id="2.1.1.67" evidence="1"/>
<dbReference type="EMBL" id="CP000507">
    <property type="protein sequence ID" value="ABL98753.1"/>
    <property type="molecule type" value="Genomic_DNA"/>
</dbReference>
<dbReference type="RefSeq" id="WP_011758663.1">
    <property type="nucleotide sequence ID" value="NC_008700.1"/>
</dbReference>
<dbReference type="SMR" id="A1S2Z7"/>
<dbReference type="STRING" id="326297.Sama_0543"/>
<dbReference type="KEGG" id="saz:Sama_0543"/>
<dbReference type="eggNOG" id="COG0500">
    <property type="taxonomic scope" value="Bacteria"/>
</dbReference>
<dbReference type="HOGENOM" id="CLU_085515_1_0_6"/>
<dbReference type="OrthoDB" id="9778208at2"/>
<dbReference type="Proteomes" id="UP000009175">
    <property type="component" value="Chromosome"/>
</dbReference>
<dbReference type="GO" id="GO:0005737">
    <property type="term" value="C:cytoplasm"/>
    <property type="evidence" value="ECO:0007669"/>
    <property type="project" value="UniProtKB-SubCell"/>
</dbReference>
<dbReference type="GO" id="GO:0008119">
    <property type="term" value="F:thiopurine S-methyltransferase activity"/>
    <property type="evidence" value="ECO:0007669"/>
    <property type="project" value="UniProtKB-UniRule"/>
</dbReference>
<dbReference type="GO" id="GO:0032259">
    <property type="term" value="P:methylation"/>
    <property type="evidence" value="ECO:0007669"/>
    <property type="project" value="UniProtKB-KW"/>
</dbReference>
<dbReference type="GO" id="GO:0010038">
    <property type="term" value="P:response to metal ion"/>
    <property type="evidence" value="ECO:0007669"/>
    <property type="project" value="InterPro"/>
</dbReference>
<dbReference type="FunFam" id="3.40.50.150:FF:000101">
    <property type="entry name" value="Thiopurine S-methyltransferase"/>
    <property type="match status" value="1"/>
</dbReference>
<dbReference type="Gene3D" id="3.40.50.150">
    <property type="entry name" value="Vaccinia Virus protein VP39"/>
    <property type="match status" value="1"/>
</dbReference>
<dbReference type="HAMAP" id="MF_00812">
    <property type="entry name" value="Thiopur_methtran"/>
    <property type="match status" value="1"/>
</dbReference>
<dbReference type="InterPro" id="IPR029063">
    <property type="entry name" value="SAM-dependent_MTases_sf"/>
</dbReference>
<dbReference type="InterPro" id="IPR022474">
    <property type="entry name" value="Thiopur_S-MeTfrase_Se/Te_detox"/>
</dbReference>
<dbReference type="InterPro" id="IPR025835">
    <property type="entry name" value="Thiopurine_S-MeTrfase"/>
</dbReference>
<dbReference type="InterPro" id="IPR008854">
    <property type="entry name" value="TPMT"/>
</dbReference>
<dbReference type="NCBIfam" id="NF009732">
    <property type="entry name" value="PRK13255.1"/>
    <property type="match status" value="1"/>
</dbReference>
<dbReference type="NCBIfam" id="TIGR03840">
    <property type="entry name" value="TMPT_Se_Te"/>
    <property type="match status" value="1"/>
</dbReference>
<dbReference type="PANTHER" id="PTHR10259">
    <property type="entry name" value="THIOPURINE S-METHYLTRANSFERASE"/>
    <property type="match status" value="1"/>
</dbReference>
<dbReference type="PANTHER" id="PTHR10259:SF11">
    <property type="entry name" value="THIOPURINE S-METHYLTRANSFERASE"/>
    <property type="match status" value="1"/>
</dbReference>
<dbReference type="Pfam" id="PF05724">
    <property type="entry name" value="TPMT"/>
    <property type="match status" value="1"/>
</dbReference>
<dbReference type="PIRSF" id="PIRSF023956">
    <property type="entry name" value="Thiopurine_S-methyltransferase"/>
    <property type="match status" value="1"/>
</dbReference>
<dbReference type="SUPFAM" id="SSF53335">
    <property type="entry name" value="S-adenosyl-L-methionine-dependent methyltransferases"/>
    <property type="match status" value="1"/>
</dbReference>
<dbReference type="PROSITE" id="PS51585">
    <property type="entry name" value="SAM_MT_TPMT"/>
    <property type="match status" value="1"/>
</dbReference>
<protein>
    <recommendedName>
        <fullName evidence="1">Thiopurine S-methyltransferase</fullName>
        <ecNumber evidence="1">2.1.1.67</ecNumber>
    </recommendedName>
    <alternativeName>
        <fullName evidence="1">Thiopurine methyltransferase</fullName>
    </alternativeName>
</protein>
<proteinExistence type="inferred from homology"/>
<gene>
    <name evidence="1" type="primary">tpm</name>
    <name type="ordered locus">Sama_0543</name>
</gene>
<feature type="chain" id="PRO_1000047216" description="Thiopurine S-methyltransferase">
    <location>
        <begin position="1"/>
        <end position="218"/>
    </location>
</feature>
<feature type="binding site" evidence="1">
    <location>
        <position position="10"/>
    </location>
    <ligand>
        <name>S-adenosyl-L-methionine</name>
        <dbReference type="ChEBI" id="CHEBI:59789"/>
    </ligand>
</feature>
<feature type="binding site" evidence="1">
    <location>
        <position position="45"/>
    </location>
    <ligand>
        <name>S-adenosyl-L-methionine</name>
        <dbReference type="ChEBI" id="CHEBI:59789"/>
    </ligand>
</feature>
<feature type="binding site" evidence="1">
    <location>
        <position position="66"/>
    </location>
    <ligand>
        <name>S-adenosyl-L-methionine</name>
        <dbReference type="ChEBI" id="CHEBI:59789"/>
    </ligand>
</feature>
<feature type="binding site" evidence="1">
    <location>
        <position position="123"/>
    </location>
    <ligand>
        <name>S-adenosyl-L-methionine</name>
        <dbReference type="ChEBI" id="CHEBI:59789"/>
    </ligand>
</feature>
<evidence type="ECO:0000255" key="1">
    <source>
        <dbReference type="HAMAP-Rule" id="MF_00812"/>
    </source>
</evidence>
<comment type="catalytic activity">
    <reaction evidence="1">
        <text>S-adenosyl-L-methionine + a thiopurine = S-adenosyl-L-homocysteine + a thiopurine S-methylether.</text>
        <dbReference type="EC" id="2.1.1.67"/>
    </reaction>
</comment>
<comment type="subcellular location">
    <subcellularLocation>
        <location evidence="1">Cytoplasm</location>
    </subcellularLocation>
</comment>
<comment type="similarity">
    <text evidence="1">Belongs to the class I-like SAM-binding methyltransferase superfamily. TPMT family.</text>
</comment>
<name>TPMT_SHEAM</name>
<accession>A1S2Z7</accession>
<sequence length="218" mass="24240">MEPGFWHDKWQSQQIGFHQSDINPFLVKHWESLKLEGKGKVFVPLCGKSLDMEFLAAQGHEVIGSELSALAVSQFFEAAGAKPQSRTQGEHVHHSAQGVTLIEGDFFTLDEELVAGCSGFYDRAALIAWPAEMRIDYVRKLAALIPAGTPGLLITLDYPQEALIGPPFAVSPNWVEEFVGEYFEVVVLESQDVLADNPRFVKKAVPWLNEAAYLLVRK</sequence>